<feature type="chain" id="PRO_0000301874" description="3-hydroxydecanoyl-[acyl-carrier-protein] dehydratase">
    <location>
        <begin position="1"/>
        <end position="171"/>
    </location>
</feature>
<feature type="active site" evidence="1">
    <location>
        <position position="70"/>
    </location>
</feature>
<accession>A4VKR6</accession>
<reference key="1">
    <citation type="journal article" date="2008" name="Proc. Natl. Acad. Sci. U.S.A.">
        <title>Nitrogen fixation island and rhizosphere competence traits in the genome of root-associated Pseudomonas stutzeri A1501.</title>
        <authorList>
            <person name="Yan Y."/>
            <person name="Yang J."/>
            <person name="Dou Y."/>
            <person name="Chen M."/>
            <person name="Ping S."/>
            <person name="Peng J."/>
            <person name="Lu W."/>
            <person name="Zhang W."/>
            <person name="Yao Z."/>
            <person name="Li H."/>
            <person name="Liu W."/>
            <person name="He S."/>
            <person name="Geng L."/>
            <person name="Zhang X."/>
            <person name="Yang F."/>
            <person name="Yu H."/>
            <person name="Zhan Y."/>
            <person name="Li D."/>
            <person name="Lin Z."/>
            <person name="Wang Y."/>
            <person name="Elmerich C."/>
            <person name="Lin M."/>
            <person name="Jin Q."/>
        </authorList>
    </citation>
    <scope>NUCLEOTIDE SEQUENCE [LARGE SCALE GENOMIC DNA]</scope>
    <source>
        <strain>A1501</strain>
    </source>
</reference>
<dbReference type="EC" id="4.2.1.59" evidence="1"/>
<dbReference type="EC" id="5.3.3.14" evidence="1"/>
<dbReference type="EMBL" id="CP000304">
    <property type="protein sequence ID" value="ABP79567.1"/>
    <property type="molecule type" value="Genomic_DNA"/>
</dbReference>
<dbReference type="RefSeq" id="WP_011913037.1">
    <property type="nucleotide sequence ID" value="NC_009434.1"/>
</dbReference>
<dbReference type="SMR" id="A4VKR6"/>
<dbReference type="KEGG" id="psa:PST_1893"/>
<dbReference type="eggNOG" id="COG0764">
    <property type="taxonomic scope" value="Bacteria"/>
</dbReference>
<dbReference type="HOGENOM" id="CLU_097925_0_0_6"/>
<dbReference type="UniPathway" id="UPA00094"/>
<dbReference type="Proteomes" id="UP000000233">
    <property type="component" value="Chromosome"/>
</dbReference>
<dbReference type="GO" id="GO:0005737">
    <property type="term" value="C:cytoplasm"/>
    <property type="evidence" value="ECO:0007669"/>
    <property type="project" value="UniProtKB-SubCell"/>
</dbReference>
<dbReference type="GO" id="GO:0019171">
    <property type="term" value="F:(3R)-hydroxyacyl-[acyl-carrier-protein] dehydratase activity"/>
    <property type="evidence" value="ECO:0007669"/>
    <property type="project" value="UniProtKB-UniRule"/>
</dbReference>
<dbReference type="GO" id="GO:0034017">
    <property type="term" value="F:trans-2-decenoyl-acyl-carrier-protein isomerase activity"/>
    <property type="evidence" value="ECO:0007669"/>
    <property type="project" value="UniProtKB-UniRule"/>
</dbReference>
<dbReference type="GO" id="GO:0006636">
    <property type="term" value="P:unsaturated fatty acid biosynthetic process"/>
    <property type="evidence" value="ECO:0007669"/>
    <property type="project" value="UniProtKB-UniRule"/>
</dbReference>
<dbReference type="CDD" id="cd01287">
    <property type="entry name" value="FabA"/>
    <property type="match status" value="1"/>
</dbReference>
<dbReference type="FunFam" id="3.10.129.10:FF:000003">
    <property type="entry name" value="3-hydroxydecanoyl-[acyl-carrier-protein] dehydratase"/>
    <property type="match status" value="1"/>
</dbReference>
<dbReference type="Gene3D" id="3.10.129.10">
    <property type="entry name" value="Hotdog Thioesterase"/>
    <property type="match status" value="1"/>
</dbReference>
<dbReference type="HAMAP" id="MF_00405">
    <property type="entry name" value="FabA"/>
    <property type="match status" value="1"/>
</dbReference>
<dbReference type="InterPro" id="IPR010083">
    <property type="entry name" value="FabA"/>
</dbReference>
<dbReference type="InterPro" id="IPR013114">
    <property type="entry name" value="FabA_FabZ"/>
</dbReference>
<dbReference type="InterPro" id="IPR029069">
    <property type="entry name" value="HotDog_dom_sf"/>
</dbReference>
<dbReference type="NCBIfam" id="TIGR01749">
    <property type="entry name" value="fabA"/>
    <property type="match status" value="1"/>
</dbReference>
<dbReference type="NCBIfam" id="NF003509">
    <property type="entry name" value="PRK05174.1"/>
    <property type="match status" value="1"/>
</dbReference>
<dbReference type="PANTHER" id="PTHR30272">
    <property type="entry name" value="3-HYDROXYACYL-[ACYL-CARRIER-PROTEIN] DEHYDRATASE"/>
    <property type="match status" value="1"/>
</dbReference>
<dbReference type="PANTHER" id="PTHR30272:SF8">
    <property type="entry name" value="3-HYDROXYDECANOYL-[ACYL-CARRIER-PROTEIN] DEHYDRATASE"/>
    <property type="match status" value="1"/>
</dbReference>
<dbReference type="Pfam" id="PF07977">
    <property type="entry name" value="FabA"/>
    <property type="match status" value="1"/>
</dbReference>
<dbReference type="SUPFAM" id="SSF54637">
    <property type="entry name" value="Thioesterase/thiol ester dehydrase-isomerase"/>
    <property type="match status" value="1"/>
</dbReference>
<protein>
    <recommendedName>
        <fullName evidence="1">3-hydroxydecanoyl-[acyl-carrier-protein] dehydratase</fullName>
        <ecNumber evidence="1">4.2.1.59</ecNumber>
    </recommendedName>
    <alternativeName>
        <fullName evidence="1">3-hydroxyacyl-[acyl-carrier-protein] dehydratase FabA</fullName>
    </alternativeName>
    <alternativeName>
        <fullName evidence="1">Beta-hydroxydecanoyl thioester dehydrase</fullName>
    </alternativeName>
    <alternativeName>
        <fullName evidence="1">Trans-2-decenoyl-[acyl-carrier-protein] isomerase</fullName>
        <ecNumber evidence="1">5.3.3.14</ecNumber>
    </alternativeName>
</protein>
<comment type="function">
    <text evidence="1">Necessary for the introduction of cis unsaturation into fatty acids. Catalyzes the dehydration of (3R)-3-hydroxydecanoyl-ACP to E-(2)-decenoyl-ACP and then its isomerization to Z-(3)-decenoyl-ACP. Can catalyze the dehydratase reaction for beta-hydroxyacyl-ACPs with saturated chain lengths up to 16:0, being most active on intermediate chain length.</text>
</comment>
<comment type="catalytic activity">
    <reaction evidence="1">
        <text>a (3R)-hydroxyacyl-[ACP] = a (2E)-enoyl-[ACP] + H2O</text>
        <dbReference type="Rhea" id="RHEA:13097"/>
        <dbReference type="Rhea" id="RHEA-COMP:9925"/>
        <dbReference type="Rhea" id="RHEA-COMP:9945"/>
        <dbReference type="ChEBI" id="CHEBI:15377"/>
        <dbReference type="ChEBI" id="CHEBI:78784"/>
        <dbReference type="ChEBI" id="CHEBI:78827"/>
        <dbReference type="EC" id="4.2.1.59"/>
    </reaction>
</comment>
<comment type="catalytic activity">
    <reaction evidence="1">
        <text>(3R)-hydroxydecanoyl-[ACP] = (2E)-decenoyl-[ACP] + H2O</text>
        <dbReference type="Rhea" id="RHEA:41860"/>
        <dbReference type="Rhea" id="RHEA-COMP:9638"/>
        <dbReference type="Rhea" id="RHEA-COMP:9639"/>
        <dbReference type="ChEBI" id="CHEBI:15377"/>
        <dbReference type="ChEBI" id="CHEBI:78466"/>
        <dbReference type="ChEBI" id="CHEBI:78467"/>
    </reaction>
</comment>
<comment type="catalytic activity">
    <reaction evidence="1">
        <text>(2E)-decenoyl-[ACP] = (3Z)-decenoyl-[ACP]</text>
        <dbReference type="Rhea" id="RHEA:23568"/>
        <dbReference type="Rhea" id="RHEA-COMP:9639"/>
        <dbReference type="Rhea" id="RHEA-COMP:9927"/>
        <dbReference type="ChEBI" id="CHEBI:78467"/>
        <dbReference type="ChEBI" id="CHEBI:78798"/>
        <dbReference type="EC" id="5.3.3.14"/>
    </reaction>
</comment>
<comment type="pathway">
    <text evidence="1">Lipid metabolism; fatty acid biosynthesis.</text>
</comment>
<comment type="subunit">
    <text evidence="1">Homodimer.</text>
</comment>
<comment type="subcellular location">
    <subcellularLocation>
        <location evidence="1">Cytoplasm</location>
    </subcellularLocation>
</comment>
<comment type="similarity">
    <text evidence="1">Belongs to the thioester dehydratase family. FabA subfamily.</text>
</comment>
<proteinExistence type="inferred from homology"/>
<sequence length="171" mass="18778">MTKQHAFTREDLLRCSRGELFGPGNAQLPAPNMLMVDRIVHISEVGGKYGKGELVAELDINPDLWFFACHFEGDPVMPGCLGLDAMWQLVGFYLGWQGNPGRGRALGSGEVKFFGQVLPTAKKVTYNIHIKRTINRSLILGIADGTVSVDGREIYSAESLRVGLFTSTDSF</sequence>
<gene>
    <name evidence="1" type="primary">fabA</name>
    <name type="ordered locus">PST_1893</name>
</gene>
<keyword id="KW-0963">Cytoplasm</keyword>
<keyword id="KW-0275">Fatty acid biosynthesis</keyword>
<keyword id="KW-0276">Fatty acid metabolism</keyword>
<keyword id="KW-0413">Isomerase</keyword>
<keyword id="KW-0444">Lipid biosynthesis</keyword>
<keyword id="KW-0443">Lipid metabolism</keyword>
<keyword id="KW-0456">Lyase</keyword>
<keyword id="KW-1185">Reference proteome</keyword>
<name>FABA_STUS1</name>
<evidence type="ECO:0000255" key="1">
    <source>
        <dbReference type="HAMAP-Rule" id="MF_00405"/>
    </source>
</evidence>
<organism>
    <name type="scientific">Stutzerimonas stutzeri (strain A1501)</name>
    <name type="common">Pseudomonas stutzeri</name>
    <dbReference type="NCBI Taxonomy" id="379731"/>
    <lineage>
        <taxon>Bacteria</taxon>
        <taxon>Pseudomonadati</taxon>
        <taxon>Pseudomonadota</taxon>
        <taxon>Gammaproteobacteria</taxon>
        <taxon>Pseudomonadales</taxon>
        <taxon>Pseudomonadaceae</taxon>
        <taxon>Stutzerimonas</taxon>
    </lineage>
</organism>